<accession>P23318</accession>
<organism>
    <name type="scientific">Thermostichus vulcanus</name>
    <name type="common">Synechococcus vulcanus</name>
    <dbReference type="NCBI Taxonomy" id="32053"/>
    <lineage>
        <taxon>Bacteria</taxon>
        <taxon>Bacillati</taxon>
        <taxon>Cyanobacteriota</taxon>
        <taxon>Cyanophyceae</taxon>
        <taxon>Thermostichales</taxon>
        <taxon>Thermostichaceae</taxon>
        <taxon>Thermostichus</taxon>
    </lineage>
</organism>
<name>PSAK_THEVL</name>
<evidence type="ECO:0000255" key="1"/>
<evidence type="ECO:0000269" key="2">
    <source>
    </source>
</evidence>
<evidence type="ECO:0000305" key="3"/>
<reference key="1">
    <citation type="book" date="1992" name="Current topics in photosynthesis">
        <title>The photosystems: structure, function, and molecular biology.</title>
        <editorList>
            <person name="Barber J."/>
        </editorList>
        <authorList>
            <person name="Bryant D.A."/>
        </authorList>
    </citation>
    <scope>NUCLEOTIDE SEQUENCE [GENOMIC DNA]</scope>
</reference>
<reference key="2">
    <citation type="journal article" date="1989" name="FEBS Lett.">
        <title>Identification of photosystem I components from the cyanobacterium, Synechococcus vulcanus by N-terminal sequencing.</title>
        <authorList>
            <person name="Koike H."/>
            <person name="Ikeuchi M."/>
            <person name="Hiyama T."/>
            <person name="Inoue Y."/>
        </authorList>
    </citation>
    <scope>PROTEIN SEQUENCE OF 6-35</scope>
</reference>
<comment type="subcellular location">
    <subcellularLocation>
        <location evidence="3">Cellular thylakoid membrane</location>
        <topology evidence="3">Multi-pass membrane protein</topology>
    </subcellularLocation>
</comment>
<comment type="similarity">
    <text evidence="3">Belongs to the PsaG/PsaK family.</text>
</comment>
<proteinExistence type="evidence at protein level"/>
<dbReference type="PIR" id="S05223">
    <property type="entry name" value="S05223"/>
</dbReference>
<dbReference type="PDB" id="6K33">
    <property type="method" value="EM"/>
    <property type="resolution" value="2.74 A"/>
    <property type="chains" value="aK/bK/cK=1-85"/>
</dbReference>
<dbReference type="PDBsum" id="6K33"/>
<dbReference type="EMDB" id="EMD-9908"/>
<dbReference type="SMR" id="P23318"/>
<dbReference type="GO" id="GO:0009522">
    <property type="term" value="C:photosystem I"/>
    <property type="evidence" value="ECO:0007669"/>
    <property type="project" value="UniProtKB-KW"/>
</dbReference>
<dbReference type="GO" id="GO:0031676">
    <property type="term" value="C:plasma membrane-derived thylakoid membrane"/>
    <property type="evidence" value="ECO:0007669"/>
    <property type="project" value="UniProtKB-SubCell"/>
</dbReference>
<dbReference type="GO" id="GO:0015979">
    <property type="term" value="P:photosynthesis"/>
    <property type="evidence" value="ECO:0007669"/>
    <property type="project" value="UniProtKB-UniRule"/>
</dbReference>
<dbReference type="Gene3D" id="1.20.860.20">
    <property type="entry name" value="Photosystem I PsaK, reaction centre"/>
    <property type="match status" value="1"/>
</dbReference>
<dbReference type="HAMAP" id="MF_00474">
    <property type="entry name" value="PSI_PsaK"/>
    <property type="match status" value="1"/>
</dbReference>
<dbReference type="InterPro" id="IPR035982">
    <property type="entry name" value="PSI_centre_PsaK_sf"/>
</dbReference>
<dbReference type="InterPro" id="IPR000549">
    <property type="entry name" value="PSI_PsaG/PsaK"/>
</dbReference>
<dbReference type="InterPro" id="IPR017492">
    <property type="entry name" value="PSI_PsaK"/>
</dbReference>
<dbReference type="InterPro" id="IPR037101">
    <property type="entry name" value="PSI_PsaK_bact"/>
</dbReference>
<dbReference type="NCBIfam" id="TIGR03049">
    <property type="entry name" value="PS_I_psaK"/>
    <property type="match status" value="1"/>
</dbReference>
<dbReference type="Pfam" id="PF01241">
    <property type="entry name" value="PSI_PSAK"/>
    <property type="match status" value="1"/>
</dbReference>
<dbReference type="SUPFAM" id="SSF81563">
    <property type="entry name" value="Photosystem I reaction center subunit X, PsaK"/>
    <property type="match status" value="1"/>
</dbReference>
<dbReference type="PROSITE" id="PS01026">
    <property type="entry name" value="PHOTOSYSTEM_I_PSAGK"/>
    <property type="match status" value="1"/>
</dbReference>
<keyword id="KW-0002">3D-structure</keyword>
<keyword id="KW-0903">Direct protein sequencing</keyword>
<keyword id="KW-0472">Membrane</keyword>
<keyword id="KW-0602">Photosynthesis</keyword>
<keyword id="KW-0603">Photosystem I</keyword>
<keyword id="KW-0793">Thylakoid</keyword>
<keyword id="KW-0812">Transmembrane</keyword>
<keyword id="KW-1133">Transmembrane helix</keyword>
<feature type="propeptide" id="PRO_0000029406" evidence="2">
    <location>
        <begin position="1"/>
        <end position="5"/>
    </location>
</feature>
<feature type="chain" id="PRO_0000029407" description="Photosystem I reaction center subunit PsaK">
    <location>
        <begin position="6"/>
        <end position="85"/>
    </location>
</feature>
<feature type="transmembrane region" description="Helical" evidence="1">
    <location>
        <begin position="13"/>
        <end position="31"/>
    </location>
</feature>
<feature type="transmembrane region" description="Helical" evidence="1">
    <location>
        <begin position="69"/>
        <end position="85"/>
    </location>
</feature>
<gene>
    <name type="primary">psaK</name>
</gene>
<protein>
    <recommendedName>
        <fullName>Photosystem I reaction center subunit PsaK</fullName>
    </recommendedName>
    <alternativeName>
        <fullName>Light-harvesting 6.5 kDa polypeptide</fullName>
    </alternativeName>
    <alternativeName>
        <fullName>Photosystem I subunit X</fullName>
    </alternativeName>
</protein>
<sequence length="85" mass="8664">MVLATTLPDTTWTPSVGLVVILSNLFAIALGRYAIQSRGKGPGLPIALPALFEGFGLPELLATTSFGHLLAAGVVSVGLQYAGAL</sequence>